<sequence length="100" mass="11199">MIREERLLKVLRAPHVSEKASTAMEKSNTIVLKVAKDATKAEIKAAVQKLFEVEVEVVNTLVVKGKVKRHGQRIGRRSDWKKAYVTLKEGQNLDFVGGAE</sequence>
<dbReference type="EMBL" id="CP000036">
    <property type="protein sequence ID" value="ABB67800.1"/>
    <property type="molecule type" value="Genomic_DNA"/>
</dbReference>
<dbReference type="RefSeq" id="WP_000617544.1">
    <property type="nucleotide sequence ID" value="NC_007613.1"/>
</dbReference>
<dbReference type="SMR" id="Q31VV8"/>
<dbReference type="GeneID" id="93778669"/>
<dbReference type="KEGG" id="sbo:SBO_3312"/>
<dbReference type="HOGENOM" id="CLU_037562_3_1_6"/>
<dbReference type="Proteomes" id="UP000007067">
    <property type="component" value="Chromosome"/>
</dbReference>
<dbReference type="GO" id="GO:1990904">
    <property type="term" value="C:ribonucleoprotein complex"/>
    <property type="evidence" value="ECO:0007669"/>
    <property type="project" value="UniProtKB-KW"/>
</dbReference>
<dbReference type="GO" id="GO:0005840">
    <property type="term" value="C:ribosome"/>
    <property type="evidence" value="ECO:0007669"/>
    <property type="project" value="UniProtKB-KW"/>
</dbReference>
<dbReference type="GO" id="GO:0019843">
    <property type="term" value="F:rRNA binding"/>
    <property type="evidence" value="ECO:0007669"/>
    <property type="project" value="UniProtKB-UniRule"/>
</dbReference>
<dbReference type="GO" id="GO:0003735">
    <property type="term" value="F:structural constituent of ribosome"/>
    <property type="evidence" value="ECO:0007669"/>
    <property type="project" value="InterPro"/>
</dbReference>
<dbReference type="GO" id="GO:0006412">
    <property type="term" value="P:translation"/>
    <property type="evidence" value="ECO:0007669"/>
    <property type="project" value="UniProtKB-UniRule"/>
</dbReference>
<dbReference type="FunFam" id="3.30.70.330:FF:000001">
    <property type="entry name" value="50S ribosomal protein L23"/>
    <property type="match status" value="1"/>
</dbReference>
<dbReference type="Gene3D" id="3.30.70.330">
    <property type="match status" value="1"/>
</dbReference>
<dbReference type="HAMAP" id="MF_01369_B">
    <property type="entry name" value="Ribosomal_uL23_B"/>
    <property type="match status" value="1"/>
</dbReference>
<dbReference type="InterPro" id="IPR012677">
    <property type="entry name" value="Nucleotide-bd_a/b_plait_sf"/>
</dbReference>
<dbReference type="InterPro" id="IPR013025">
    <property type="entry name" value="Ribosomal_uL23-like"/>
</dbReference>
<dbReference type="InterPro" id="IPR012678">
    <property type="entry name" value="Ribosomal_uL23/eL15/eS24_sf"/>
</dbReference>
<dbReference type="InterPro" id="IPR001014">
    <property type="entry name" value="Ribosomal_uL23_CS"/>
</dbReference>
<dbReference type="NCBIfam" id="NF004358">
    <property type="entry name" value="PRK05738.1-1"/>
    <property type="match status" value="1"/>
</dbReference>
<dbReference type="NCBIfam" id="NF004359">
    <property type="entry name" value="PRK05738.1-3"/>
    <property type="match status" value="1"/>
</dbReference>
<dbReference type="NCBIfam" id="NF004363">
    <property type="entry name" value="PRK05738.2-4"/>
    <property type="match status" value="1"/>
</dbReference>
<dbReference type="PANTHER" id="PTHR11620">
    <property type="entry name" value="60S RIBOSOMAL PROTEIN L23A"/>
    <property type="match status" value="1"/>
</dbReference>
<dbReference type="Pfam" id="PF00276">
    <property type="entry name" value="Ribosomal_L23"/>
    <property type="match status" value="1"/>
</dbReference>
<dbReference type="SUPFAM" id="SSF54189">
    <property type="entry name" value="Ribosomal proteins S24e, L23 and L15e"/>
    <property type="match status" value="1"/>
</dbReference>
<dbReference type="PROSITE" id="PS00050">
    <property type="entry name" value="RIBOSOMAL_L23"/>
    <property type="match status" value="1"/>
</dbReference>
<gene>
    <name evidence="1" type="primary">rplW</name>
    <name type="ordered locus">SBO_3312</name>
</gene>
<evidence type="ECO:0000255" key="1">
    <source>
        <dbReference type="HAMAP-Rule" id="MF_01369"/>
    </source>
</evidence>
<evidence type="ECO:0000305" key="2"/>
<reference key="1">
    <citation type="journal article" date="2005" name="Nucleic Acids Res.">
        <title>Genome dynamics and diversity of Shigella species, the etiologic agents of bacillary dysentery.</title>
        <authorList>
            <person name="Yang F."/>
            <person name="Yang J."/>
            <person name="Zhang X."/>
            <person name="Chen L."/>
            <person name="Jiang Y."/>
            <person name="Yan Y."/>
            <person name="Tang X."/>
            <person name="Wang J."/>
            <person name="Xiong Z."/>
            <person name="Dong J."/>
            <person name="Xue Y."/>
            <person name="Zhu Y."/>
            <person name="Xu X."/>
            <person name="Sun L."/>
            <person name="Chen S."/>
            <person name="Nie H."/>
            <person name="Peng J."/>
            <person name="Xu J."/>
            <person name="Wang Y."/>
            <person name="Yuan Z."/>
            <person name="Wen Y."/>
            <person name="Yao Z."/>
            <person name="Shen Y."/>
            <person name="Qiang B."/>
            <person name="Hou Y."/>
            <person name="Yu J."/>
            <person name="Jin Q."/>
        </authorList>
    </citation>
    <scope>NUCLEOTIDE SEQUENCE [LARGE SCALE GENOMIC DNA]</scope>
    <source>
        <strain>Sb227</strain>
    </source>
</reference>
<name>RL23_SHIBS</name>
<accession>Q31VV8</accession>
<organism>
    <name type="scientific">Shigella boydii serotype 4 (strain Sb227)</name>
    <dbReference type="NCBI Taxonomy" id="300268"/>
    <lineage>
        <taxon>Bacteria</taxon>
        <taxon>Pseudomonadati</taxon>
        <taxon>Pseudomonadota</taxon>
        <taxon>Gammaproteobacteria</taxon>
        <taxon>Enterobacterales</taxon>
        <taxon>Enterobacteriaceae</taxon>
        <taxon>Shigella</taxon>
    </lineage>
</organism>
<proteinExistence type="inferred from homology"/>
<feature type="chain" id="PRO_0000272844" description="Large ribosomal subunit protein uL23">
    <location>
        <begin position="1"/>
        <end position="100"/>
    </location>
</feature>
<comment type="function">
    <text evidence="1">One of the early assembly proteins it binds 23S rRNA. One of the proteins that surrounds the polypeptide exit tunnel on the outside of the ribosome. Forms the main docking site for trigger factor binding to the ribosome.</text>
</comment>
<comment type="subunit">
    <text evidence="1">Part of the 50S ribosomal subunit. Contacts protein L29, and trigger factor when it is bound to the ribosome.</text>
</comment>
<comment type="similarity">
    <text evidence="1">Belongs to the universal ribosomal protein uL23 family.</text>
</comment>
<keyword id="KW-0687">Ribonucleoprotein</keyword>
<keyword id="KW-0689">Ribosomal protein</keyword>
<keyword id="KW-0694">RNA-binding</keyword>
<keyword id="KW-0699">rRNA-binding</keyword>
<protein>
    <recommendedName>
        <fullName evidence="1">Large ribosomal subunit protein uL23</fullName>
    </recommendedName>
    <alternativeName>
        <fullName evidence="2">50S ribosomal protein L23</fullName>
    </alternativeName>
</protein>